<protein>
    <recommendedName>
        <fullName evidence="1">Acetyl-coenzyme A synthetase</fullName>
        <shortName evidence="1">AcCoA synthetase</shortName>
        <shortName evidence="1">Acs</shortName>
        <ecNumber evidence="1">6.2.1.1</ecNumber>
    </recommendedName>
    <alternativeName>
        <fullName evidence="1">Acetate--CoA ligase</fullName>
    </alternativeName>
    <alternativeName>
        <fullName evidence="1">Acyl-activating enzyme</fullName>
    </alternativeName>
</protein>
<dbReference type="EC" id="6.2.1.1" evidence="1"/>
<dbReference type="EMBL" id="AL590842">
    <property type="protein sequence ID" value="CAL18937.1"/>
    <property type="molecule type" value="Genomic_DNA"/>
</dbReference>
<dbReference type="EMBL" id="AE009952">
    <property type="protein sequence ID" value="AAM84099.1"/>
    <property type="status" value="ALT_INIT"/>
    <property type="molecule type" value="Genomic_DNA"/>
</dbReference>
<dbReference type="EMBL" id="AE017042">
    <property type="protein sequence ID" value="AAS60677.1"/>
    <property type="status" value="ALT_INIT"/>
    <property type="molecule type" value="Genomic_DNA"/>
</dbReference>
<dbReference type="PIR" id="AG0031">
    <property type="entry name" value="AG0031"/>
</dbReference>
<dbReference type="RefSeq" id="WP_002209031.1">
    <property type="nucleotide sequence ID" value="NZ_WHLN01000017.1"/>
</dbReference>
<dbReference type="RefSeq" id="YP_002345333.1">
    <property type="nucleotide sequence ID" value="NC_003143.1"/>
</dbReference>
<dbReference type="SMR" id="Q8D1G8"/>
<dbReference type="IntAct" id="Q8D1G8">
    <property type="interactions" value="6"/>
</dbReference>
<dbReference type="STRING" id="214092.YPO0253"/>
<dbReference type="PaxDb" id="214092-YPO0253"/>
<dbReference type="EnsemblBacteria" id="AAS60677">
    <property type="protein sequence ID" value="AAS60677"/>
    <property type="gene ID" value="YP_0406"/>
</dbReference>
<dbReference type="GeneID" id="57974350"/>
<dbReference type="KEGG" id="ype:YPO0253"/>
<dbReference type="KEGG" id="ypk:y0510"/>
<dbReference type="KEGG" id="ypm:YP_0406"/>
<dbReference type="PATRIC" id="fig|214092.21.peg.482"/>
<dbReference type="eggNOG" id="COG0365">
    <property type="taxonomic scope" value="Bacteria"/>
</dbReference>
<dbReference type="HOGENOM" id="CLU_000022_3_6_6"/>
<dbReference type="OMA" id="INVSYNC"/>
<dbReference type="OrthoDB" id="9803968at2"/>
<dbReference type="Proteomes" id="UP000000815">
    <property type="component" value="Chromosome"/>
</dbReference>
<dbReference type="Proteomes" id="UP000001019">
    <property type="component" value="Chromosome"/>
</dbReference>
<dbReference type="Proteomes" id="UP000002490">
    <property type="component" value="Chromosome"/>
</dbReference>
<dbReference type="GO" id="GO:0005829">
    <property type="term" value="C:cytosol"/>
    <property type="evidence" value="ECO:0000318"/>
    <property type="project" value="GO_Central"/>
</dbReference>
<dbReference type="GO" id="GO:0003987">
    <property type="term" value="F:acetate-CoA ligase activity"/>
    <property type="evidence" value="ECO:0000318"/>
    <property type="project" value="GO_Central"/>
</dbReference>
<dbReference type="GO" id="GO:0016208">
    <property type="term" value="F:AMP binding"/>
    <property type="evidence" value="ECO:0007669"/>
    <property type="project" value="InterPro"/>
</dbReference>
<dbReference type="GO" id="GO:0005524">
    <property type="term" value="F:ATP binding"/>
    <property type="evidence" value="ECO:0007669"/>
    <property type="project" value="UniProtKB-KW"/>
</dbReference>
<dbReference type="GO" id="GO:0046872">
    <property type="term" value="F:metal ion binding"/>
    <property type="evidence" value="ECO:0007669"/>
    <property type="project" value="UniProtKB-KW"/>
</dbReference>
<dbReference type="GO" id="GO:0006085">
    <property type="term" value="P:acetyl-CoA biosynthetic process"/>
    <property type="evidence" value="ECO:0000318"/>
    <property type="project" value="GO_Central"/>
</dbReference>
<dbReference type="GO" id="GO:0019427">
    <property type="term" value="P:acetyl-CoA biosynthetic process from acetate"/>
    <property type="evidence" value="ECO:0007669"/>
    <property type="project" value="UniProtKB-UniRule"/>
</dbReference>
<dbReference type="GO" id="GO:0006935">
    <property type="term" value="P:chemotaxis"/>
    <property type="evidence" value="ECO:0007669"/>
    <property type="project" value="UniProtKB-UniRule"/>
</dbReference>
<dbReference type="CDD" id="cd05966">
    <property type="entry name" value="ACS"/>
    <property type="match status" value="1"/>
</dbReference>
<dbReference type="FunFam" id="3.30.300.30:FF:000004">
    <property type="entry name" value="Acetyl-coenzyme A synthetase"/>
    <property type="match status" value="1"/>
</dbReference>
<dbReference type="FunFam" id="3.40.50.12780:FF:000001">
    <property type="entry name" value="Acetyl-coenzyme A synthetase"/>
    <property type="match status" value="1"/>
</dbReference>
<dbReference type="Gene3D" id="3.30.300.30">
    <property type="match status" value="1"/>
</dbReference>
<dbReference type="Gene3D" id="3.40.50.12780">
    <property type="entry name" value="N-terminal domain of ligase-like"/>
    <property type="match status" value="1"/>
</dbReference>
<dbReference type="HAMAP" id="MF_01123">
    <property type="entry name" value="Ac_CoA_synth"/>
    <property type="match status" value="1"/>
</dbReference>
<dbReference type="InterPro" id="IPR011904">
    <property type="entry name" value="Ac_CoA_lig"/>
</dbReference>
<dbReference type="InterPro" id="IPR032387">
    <property type="entry name" value="ACAS_N"/>
</dbReference>
<dbReference type="InterPro" id="IPR025110">
    <property type="entry name" value="AMP-bd_C"/>
</dbReference>
<dbReference type="InterPro" id="IPR045851">
    <property type="entry name" value="AMP-bd_C_sf"/>
</dbReference>
<dbReference type="InterPro" id="IPR020845">
    <property type="entry name" value="AMP-binding_CS"/>
</dbReference>
<dbReference type="InterPro" id="IPR000873">
    <property type="entry name" value="AMP-dep_synth/lig_dom"/>
</dbReference>
<dbReference type="InterPro" id="IPR042099">
    <property type="entry name" value="ANL_N_sf"/>
</dbReference>
<dbReference type="NCBIfam" id="TIGR02188">
    <property type="entry name" value="Ac_CoA_lig_AcsA"/>
    <property type="match status" value="1"/>
</dbReference>
<dbReference type="NCBIfam" id="NF001208">
    <property type="entry name" value="PRK00174.1"/>
    <property type="match status" value="1"/>
</dbReference>
<dbReference type="PANTHER" id="PTHR24095">
    <property type="entry name" value="ACETYL-COENZYME A SYNTHETASE"/>
    <property type="match status" value="1"/>
</dbReference>
<dbReference type="PANTHER" id="PTHR24095:SF243">
    <property type="entry name" value="ACETYL-COENZYME A SYNTHETASE"/>
    <property type="match status" value="1"/>
</dbReference>
<dbReference type="Pfam" id="PF16177">
    <property type="entry name" value="ACAS_N"/>
    <property type="match status" value="1"/>
</dbReference>
<dbReference type="Pfam" id="PF00501">
    <property type="entry name" value="AMP-binding"/>
    <property type="match status" value="1"/>
</dbReference>
<dbReference type="Pfam" id="PF13193">
    <property type="entry name" value="AMP-binding_C"/>
    <property type="match status" value="1"/>
</dbReference>
<dbReference type="SUPFAM" id="SSF56801">
    <property type="entry name" value="Acetyl-CoA synthetase-like"/>
    <property type="match status" value="1"/>
</dbReference>
<dbReference type="PROSITE" id="PS00455">
    <property type="entry name" value="AMP_BINDING"/>
    <property type="match status" value="1"/>
</dbReference>
<accession>Q8D1G8</accession>
<accession>Q0WK55</accession>
<accession>Q8ZJ71</accession>
<name>ACSA_YERPE</name>
<reference key="1">
    <citation type="journal article" date="2001" name="Nature">
        <title>Genome sequence of Yersinia pestis, the causative agent of plague.</title>
        <authorList>
            <person name="Parkhill J."/>
            <person name="Wren B.W."/>
            <person name="Thomson N.R."/>
            <person name="Titball R.W."/>
            <person name="Holden M.T.G."/>
            <person name="Prentice M.B."/>
            <person name="Sebaihia M."/>
            <person name="James K.D."/>
            <person name="Churcher C.M."/>
            <person name="Mungall K.L."/>
            <person name="Baker S."/>
            <person name="Basham D."/>
            <person name="Bentley S.D."/>
            <person name="Brooks K."/>
            <person name="Cerdeno-Tarraga A.-M."/>
            <person name="Chillingworth T."/>
            <person name="Cronin A."/>
            <person name="Davies R.M."/>
            <person name="Davis P."/>
            <person name="Dougan G."/>
            <person name="Feltwell T."/>
            <person name="Hamlin N."/>
            <person name="Holroyd S."/>
            <person name="Jagels K."/>
            <person name="Karlyshev A.V."/>
            <person name="Leather S."/>
            <person name="Moule S."/>
            <person name="Oyston P.C.F."/>
            <person name="Quail M.A."/>
            <person name="Rutherford K.M."/>
            <person name="Simmonds M."/>
            <person name="Skelton J."/>
            <person name="Stevens K."/>
            <person name="Whitehead S."/>
            <person name="Barrell B.G."/>
        </authorList>
    </citation>
    <scope>NUCLEOTIDE SEQUENCE [LARGE SCALE GENOMIC DNA]</scope>
    <source>
        <strain>CO-92 / Biovar Orientalis</strain>
    </source>
</reference>
<reference key="2">
    <citation type="journal article" date="2002" name="J. Bacteriol.">
        <title>Genome sequence of Yersinia pestis KIM.</title>
        <authorList>
            <person name="Deng W."/>
            <person name="Burland V."/>
            <person name="Plunkett G. III"/>
            <person name="Boutin A."/>
            <person name="Mayhew G.F."/>
            <person name="Liss P."/>
            <person name="Perna N.T."/>
            <person name="Rose D.J."/>
            <person name="Mau B."/>
            <person name="Zhou S."/>
            <person name="Schwartz D.C."/>
            <person name="Fetherston J.D."/>
            <person name="Lindler L.E."/>
            <person name="Brubaker R.R."/>
            <person name="Plano G.V."/>
            <person name="Straley S.C."/>
            <person name="McDonough K.A."/>
            <person name="Nilles M.L."/>
            <person name="Matson J.S."/>
            <person name="Blattner F.R."/>
            <person name="Perry R.D."/>
        </authorList>
    </citation>
    <scope>NUCLEOTIDE SEQUENCE [LARGE SCALE GENOMIC DNA]</scope>
    <source>
        <strain>KIM10+ / Biovar Mediaevalis</strain>
    </source>
</reference>
<reference key="3">
    <citation type="journal article" date="2004" name="DNA Res.">
        <title>Complete genome sequence of Yersinia pestis strain 91001, an isolate avirulent to humans.</title>
        <authorList>
            <person name="Song Y."/>
            <person name="Tong Z."/>
            <person name="Wang J."/>
            <person name="Wang L."/>
            <person name="Guo Z."/>
            <person name="Han Y."/>
            <person name="Zhang J."/>
            <person name="Pei D."/>
            <person name="Zhou D."/>
            <person name="Qin H."/>
            <person name="Pang X."/>
            <person name="Han Y."/>
            <person name="Zhai J."/>
            <person name="Li M."/>
            <person name="Cui B."/>
            <person name="Qi Z."/>
            <person name="Jin L."/>
            <person name="Dai R."/>
            <person name="Chen F."/>
            <person name="Li S."/>
            <person name="Ye C."/>
            <person name="Du Z."/>
            <person name="Lin W."/>
            <person name="Wang J."/>
            <person name="Yu J."/>
            <person name="Yang H."/>
            <person name="Wang J."/>
            <person name="Huang P."/>
            <person name="Yang R."/>
        </authorList>
    </citation>
    <scope>NUCLEOTIDE SEQUENCE [LARGE SCALE GENOMIC DNA]</scope>
    <source>
        <strain>91001 / Biovar Mediaevalis</strain>
    </source>
</reference>
<evidence type="ECO:0000255" key="1">
    <source>
        <dbReference type="HAMAP-Rule" id="MF_01123"/>
    </source>
</evidence>
<evidence type="ECO:0000305" key="2"/>
<proteinExistence type="inferred from homology"/>
<keyword id="KW-0007">Acetylation</keyword>
<keyword id="KW-0067">ATP-binding</keyword>
<keyword id="KW-0436">Ligase</keyword>
<keyword id="KW-0460">Magnesium</keyword>
<keyword id="KW-0479">Metal-binding</keyword>
<keyword id="KW-0547">Nucleotide-binding</keyword>
<keyword id="KW-1185">Reference proteome</keyword>
<gene>
    <name evidence="1" type="primary">acs</name>
    <name type="ordered locus">YPO0253</name>
    <name type="ordered locus">y0510</name>
    <name type="ordered locus">YP_0406</name>
</gene>
<feature type="chain" id="PRO_0000208400" description="Acetyl-coenzyme A synthetase">
    <location>
        <begin position="1"/>
        <end position="652"/>
    </location>
</feature>
<feature type="binding site" evidence="1">
    <location>
        <begin position="191"/>
        <end position="194"/>
    </location>
    <ligand>
        <name>CoA</name>
        <dbReference type="ChEBI" id="CHEBI:57287"/>
    </ligand>
</feature>
<feature type="binding site" evidence="1">
    <location>
        <position position="311"/>
    </location>
    <ligand>
        <name>CoA</name>
        <dbReference type="ChEBI" id="CHEBI:57287"/>
    </ligand>
</feature>
<feature type="binding site" evidence="1">
    <location>
        <position position="335"/>
    </location>
    <ligand>
        <name>CoA</name>
        <dbReference type="ChEBI" id="CHEBI:57287"/>
    </ligand>
</feature>
<feature type="binding site" evidence="1">
    <location>
        <begin position="387"/>
        <end position="389"/>
    </location>
    <ligand>
        <name>ATP</name>
        <dbReference type="ChEBI" id="CHEBI:30616"/>
    </ligand>
</feature>
<feature type="binding site" evidence="1">
    <location>
        <begin position="411"/>
        <end position="416"/>
    </location>
    <ligand>
        <name>ATP</name>
        <dbReference type="ChEBI" id="CHEBI:30616"/>
    </ligand>
</feature>
<feature type="binding site" evidence="1">
    <location>
        <position position="500"/>
    </location>
    <ligand>
        <name>ATP</name>
        <dbReference type="ChEBI" id="CHEBI:30616"/>
    </ligand>
</feature>
<feature type="binding site" evidence="1">
    <location>
        <position position="515"/>
    </location>
    <ligand>
        <name>ATP</name>
        <dbReference type="ChEBI" id="CHEBI:30616"/>
    </ligand>
</feature>
<feature type="binding site" evidence="1">
    <location>
        <position position="523"/>
    </location>
    <ligand>
        <name>CoA</name>
        <dbReference type="ChEBI" id="CHEBI:57287"/>
    </ligand>
</feature>
<feature type="binding site" evidence="1">
    <location>
        <position position="526"/>
    </location>
    <ligand>
        <name>ATP</name>
        <dbReference type="ChEBI" id="CHEBI:30616"/>
    </ligand>
</feature>
<feature type="binding site" evidence="1">
    <location>
        <position position="537"/>
    </location>
    <ligand>
        <name>Mg(2+)</name>
        <dbReference type="ChEBI" id="CHEBI:18420"/>
    </ligand>
</feature>
<feature type="binding site" evidence="1">
    <location>
        <position position="539"/>
    </location>
    <ligand>
        <name>Mg(2+)</name>
        <dbReference type="ChEBI" id="CHEBI:18420"/>
    </ligand>
</feature>
<feature type="binding site" evidence="1">
    <location>
        <position position="542"/>
    </location>
    <ligand>
        <name>Mg(2+)</name>
        <dbReference type="ChEBI" id="CHEBI:18420"/>
    </ligand>
</feature>
<feature type="binding site" evidence="1">
    <location>
        <position position="584"/>
    </location>
    <ligand>
        <name>CoA</name>
        <dbReference type="ChEBI" id="CHEBI:57287"/>
    </ligand>
</feature>
<feature type="modified residue" description="N6-acetyllysine" evidence="1">
    <location>
        <position position="609"/>
    </location>
</feature>
<feature type="sequence conflict" description="In Ref. 2; AAM84099." evidence="2" ref="2">
    <original>G</original>
    <variation>S</variation>
    <location>
        <position position="128"/>
    </location>
</feature>
<sequence>MSQIHKHPIPAAIAEHALITPEKYQHYYQQSVQNPDEFWGEQGKIIDWIKPYKTVKNTSFDPGHVSIRWFEDGTLNLAANCLDRHLAERGDQTAIIWEGDDPNQSKTVTYKQLHHDVCQFANVLKSLGVKKGDVVAIYMPMVPEAAVAMLACARIGAVHSVIFGGFSPDAVAGRIIDSHSKLVITADEGIRAGRAIPLKKNVDEALKNPAITSIKNVVVFQRTGNASYWEDGRDVWWHDLIKEASADCPPEEMNAEDPLFILYTSGSTGKPKGVVHTTGGYLVYAALTFKYVFDYHPGDIYWCTADVGWVTGHSYLLYGPLACGAITLMFEGVPNYPGVNRLSQVVDKHKVNILYTAPTAIRALMAEGDKAIEGTKRDSLRIMGSVGEPINPEAWEWYYNKIGNSKCPIVDTWWQTETGGFMITPLPGATELKAGSATRPFFGVQPALVDNLGNPQEGVAEGNLVITDSWPGQARTLFGDHERFEQTYFSTFKGMYFSGDGARRDEDGYYWITGRVDDVLNVSGHRLGTAEIESALVAHPKIAEAAVVGVPHNIKGQAIYAYITLNHGEEPTPELYTEVRNWVRKEIGPLATPDILHWTDSLPKTRSGKIMRRILRKIATGDTSNLGDTSTLADPSVVEKLLEEKQSMQTPS</sequence>
<comment type="function">
    <text evidence="1">Catalyzes the conversion of acetate into acetyl-CoA (AcCoA), an essential intermediate at the junction of anabolic and catabolic pathways. Acs undergoes a two-step reaction. In the first half reaction, Acs combines acetate with ATP to form acetyl-adenylate (AcAMP) intermediate. In the second half reaction, it can then transfer the acetyl group from AcAMP to the sulfhydryl group of CoA, forming the product AcCoA.</text>
</comment>
<comment type="function">
    <text evidence="1">Enables the cell to use acetate during aerobic growth to generate energy via the TCA cycle, and biosynthetic compounds via the glyoxylate shunt. Acetylates CheY, the response regulator involved in flagellar movement and chemotaxis.</text>
</comment>
<comment type="catalytic activity">
    <reaction evidence="1">
        <text>acetate + ATP + CoA = acetyl-CoA + AMP + diphosphate</text>
        <dbReference type="Rhea" id="RHEA:23176"/>
        <dbReference type="ChEBI" id="CHEBI:30089"/>
        <dbReference type="ChEBI" id="CHEBI:30616"/>
        <dbReference type="ChEBI" id="CHEBI:33019"/>
        <dbReference type="ChEBI" id="CHEBI:57287"/>
        <dbReference type="ChEBI" id="CHEBI:57288"/>
        <dbReference type="ChEBI" id="CHEBI:456215"/>
        <dbReference type="EC" id="6.2.1.1"/>
    </reaction>
</comment>
<comment type="cofactor">
    <cofactor evidence="1">
        <name>Mg(2+)</name>
        <dbReference type="ChEBI" id="CHEBI:18420"/>
    </cofactor>
</comment>
<comment type="PTM">
    <text evidence="1">Acetylated. Deacetylation by the SIR2-homolog deacetylase activates the enzyme.</text>
</comment>
<comment type="similarity">
    <text evidence="1">Belongs to the ATP-dependent AMP-binding enzyme family.</text>
</comment>
<comment type="sequence caution" evidence="2">
    <conflict type="erroneous initiation">
        <sequence resource="EMBL-CDS" id="AAM84099"/>
    </conflict>
    <text>Extended N-terminus.</text>
</comment>
<comment type="sequence caution" evidence="2">
    <conflict type="erroneous initiation">
        <sequence resource="EMBL-CDS" id="AAS60677"/>
    </conflict>
    <text>Extended N-terminus.</text>
</comment>
<organism>
    <name type="scientific">Yersinia pestis</name>
    <dbReference type="NCBI Taxonomy" id="632"/>
    <lineage>
        <taxon>Bacteria</taxon>
        <taxon>Pseudomonadati</taxon>
        <taxon>Pseudomonadota</taxon>
        <taxon>Gammaproteobacteria</taxon>
        <taxon>Enterobacterales</taxon>
        <taxon>Yersiniaceae</taxon>
        <taxon>Yersinia</taxon>
    </lineage>
</organism>